<feature type="chain" id="PRO_1000094645" description="3-dehydroquinate synthase">
    <location>
        <begin position="1"/>
        <end position="365"/>
    </location>
</feature>
<feature type="binding site" evidence="1">
    <location>
        <begin position="107"/>
        <end position="111"/>
    </location>
    <ligand>
        <name>NAD(+)</name>
        <dbReference type="ChEBI" id="CHEBI:57540"/>
    </ligand>
</feature>
<feature type="binding site" evidence="1">
    <location>
        <begin position="131"/>
        <end position="132"/>
    </location>
    <ligand>
        <name>NAD(+)</name>
        <dbReference type="ChEBI" id="CHEBI:57540"/>
    </ligand>
</feature>
<feature type="binding site" evidence="1">
    <location>
        <position position="144"/>
    </location>
    <ligand>
        <name>NAD(+)</name>
        <dbReference type="ChEBI" id="CHEBI:57540"/>
    </ligand>
</feature>
<feature type="binding site" evidence="1">
    <location>
        <position position="153"/>
    </location>
    <ligand>
        <name>NAD(+)</name>
        <dbReference type="ChEBI" id="CHEBI:57540"/>
    </ligand>
</feature>
<feature type="binding site" evidence="1">
    <location>
        <position position="186"/>
    </location>
    <ligand>
        <name>Zn(2+)</name>
        <dbReference type="ChEBI" id="CHEBI:29105"/>
    </ligand>
</feature>
<feature type="binding site" evidence="1">
    <location>
        <position position="251"/>
    </location>
    <ligand>
        <name>Zn(2+)</name>
        <dbReference type="ChEBI" id="CHEBI:29105"/>
    </ligand>
</feature>
<feature type="binding site" evidence="1">
    <location>
        <position position="268"/>
    </location>
    <ligand>
        <name>Zn(2+)</name>
        <dbReference type="ChEBI" id="CHEBI:29105"/>
    </ligand>
</feature>
<sequence>MDATTRVELGENSYDIAIAKESLQQIGTFLRPLDLGQKVLIVSNPEIYGHYGETVVNSLQAAGFSVDTHLIPAGEQYKNLASIEKIYDTAFKNRLERSSTLLALGGGVIGDMTGFAAATWLRGINFVQVPTTLLAMVDASVGGKTGVNHPQGKNLIGAFYQPKFVLIDPTVLKTLPVREFRAGMAEVIKYGVIWDADLFTKLEAAEQIDSYATIDPDLLDLILERSCRAKAEVVSQDERESGLRAILNYGHTLGHAVESLTHYETFVHGEGVAIGMALAGAIATRMNLWTTAETQRQDALIKKAGLPTECPNNLAIEAILETLQSDKKVKSGKVRFVLPTKIGEVLITDQVSADLITDVLAPALC</sequence>
<evidence type="ECO:0000255" key="1">
    <source>
        <dbReference type="HAMAP-Rule" id="MF_00110"/>
    </source>
</evidence>
<name>AROB_PICP2</name>
<proteinExistence type="inferred from homology"/>
<accession>B1XKA0</accession>
<comment type="function">
    <text evidence="1">Catalyzes the conversion of 3-deoxy-D-arabino-heptulosonate 7-phosphate (DAHP) to dehydroquinate (DHQ).</text>
</comment>
<comment type="catalytic activity">
    <reaction evidence="1">
        <text>7-phospho-2-dehydro-3-deoxy-D-arabino-heptonate = 3-dehydroquinate + phosphate</text>
        <dbReference type="Rhea" id="RHEA:21968"/>
        <dbReference type="ChEBI" id="CHEBI:32364"/>
        <dbReference type="ChEBI" id="CHEBI:43474"/>
        <dbReference type="ChEBI" id="CHEBI:58394"/>
        <dbReference type="EC" id="4.2.3.4"/>
    </reaction>
</comment>
<comment type="cofactor">
    <cofactor evidence="1">
        <name>Co(2+)</name>
        <dbReference type="ChEBI" id="CHEBI:48828"/>
    </cofactor>
    <cofactor evidence="1">
        <name>Zn(2+)</name>
        <dbReference type="ChEBI" id="CHEBI:29105"/>
    </cofactor>
    <text evidence="1">Binds 1 divalent metal cation per subunit. Can use either Co(2+) or Zn(2+).</text>
</comment>
<comment type="cofactor">
    <cofactor evidence="1">
        <name>NAD(+)</name>
        <dbReference type="ChEBI" id="CHEBI:57540"/>
    </cofactor>
</comment>
<comment type="pathway">
    <text evidence="1">Metabolic intermediate biosynthesis; chorismate biosynthesis; chorismate from D-erythrose 4-phosphate and phosphoenolpyruvate: step 2/7.</text>
</comment>
<comment type="subcellular location">
    <subcellularLocation>
        <location evidence="1">Cytoplasm</location>
    </subcellularLocation>
</comment>
<comment type="similarity">
    <text evidence="1">Belongs to the sugar phosphate cyclases superfamily. Dehydroquinate synthase family.</text>
</comment>
<protein>
    <recommendedName>
        <fullName evidence="1">3-dehydroquinate synthase</fullName>
        <shortName evidence="1">DHQS</shortName>
        <ecNumber evidence="1">4.2.3.4</ecNumber>
    </recommendedName>
</protein>
<dbReference type="EC" id="4.2.3.4" evidence="1"/>
<dbReference type="EMBL" id="CP000951">
    <property type="protein sequence ID" value="ACA99146.1"/>
    <property type="molecule type" value="Genomic_DNA"/>
</dbReference>
<dbReference type="RefSeq" id="WP_012306769.1">
    <property type="nucleotide sequence ID" value="NZ_JAHHPU010000001.1"/>
</dbReference>
<dbReference type="SMR" id="B1XKA0"/>
<dbReference type="STRING" id="32049.SYNPCC7002_A1146"/>
<dbReference type="KEGG" id="syp:SYNPCC7002_A1146"/>
<dbReference type="eggNOG" id="COG0337">
    <property type="taxonomic scope" value="Bacteria"/>
</dbReference>
<dbReference type="HOGENOM" id="CLU_001201_0_2_3"/>
<dbReference type="UniPathway" id="UPA00053">
    <property type="reaction ID" value="UER00085"/>
</dbReference>
<dbReference type="Proteomes" id="UP000001688">
    <property type="component" value="Chromosome"/>
</dbReference>
<dbReference type="GO" id="GO:0005737">
    <property type="term" value="C:cytoplasm"/>
    <property type="evidence" value="ECO:0007669"/>
    <property type="project" value="UniProtKB-SubCell"/>
</dbReference>
<dbReference type="GO" id="GO:0003856">
    <property type="term" value="F:3-dehydroquinate synthase activity"/>
    <property type="evidence" value="ECO:0007669"/>
    <property type="project" value="UniProtKB-UniRule"/>
</dbReference>
<dbReference type="GO" id="GO:0046872">
    <property type="term" value="F:metal ion binding"/>
    <property type="evidence" value="ECO:0007669"/>
    <property type="project" value="UniProtKB-KW"/>
</dbReference>
<dbReference type="GO" id="GO:0000166">
    <property type="term" value="F:nucleotide binding"/>
    <property type="evidence" value="ECO:0007669"/>
    <property type="project" value="UniProtKB-KW"/>
</dbReference>
<dbReference type="GO" id="GO:0008652">
    <property type="term" value="P:amino acid biosynthetic process"/>
    <property type="evidence" value="ECO:0007669"/>
    <property type="project" value="UniProtKB-KW"/>
</dbReference>
<dbReference type="GO" id="GO:0009073">
    <property type="term" value="P:aromatic amino acid family biosynthetic process"/>
    <property type="evidence" value="ECO:0007669"/>
    <property type="project" value="UniProtKB-KW"/>
</dbReference>
<dbReference type="GO" id="GO:0009423">
    <property type="term" value="P:chorismate biosynthetic process"/>
    <property type="evidence" value="ECO:0007669"/>
    <property type="project" value="UniProtKB-UniRule"/>
</dbReference>
<dbReference type="CDD" id="cd08195">
    <property type="entry name" value="DHQS"/>
    <property type="match status" value="1"/>
</dbReference>
<dbReference type="FunFam" id="3.40.50.1970:FF:000001">
    <property type="entry name" value="3-dehydroquinate synthase"/>
    <property type="match status" value="1"/>
</dbReference>
<dbReference type="Gene3D" id="3.40.50.1970">
    <property type="match status" value="1"/>
</dbReference>
<dbReference type="Gene3D" id="1.20.1090.10">
    <property type="entry name" value="Dehydroquinate synthase-like - alpha domain"/>
    <property type="match status" value="1"/>
</dbReference>
<dbReference type="HAMAP" id="MF_00110">
    <property type="entry name" value="DHQ_synthase"/>
    <property type="match status" value="1"/>
</dbReference>
<dbReference type="InterPro" id="IPR050071">
    <property type="entry name" value="Dehydroquinate_synthase"/>
</dbReference>
<dbReference type="InterPro" id="IPR016037">
    <property type="entry name" value="DHQ_synth_AroB"/>
</dbReference>
<dbReference type="InterPro" id="IPR030963">
    <property type="entry name" value="DHQ_synth_fam"/>
</dbReference>
<dbReference type="InterPro" id="IPR030960">
    <property type="entry name" value="DHQS/DOIS_N"/>
</dbReference>
<dbReference type="InterPro" id="IPR056179">
    <property type="entry name" value="DHQS_C"/>
</dbReference>
<dbReference type="NCBIfam" id="TIGR01357">
    <property type="entry name" value="aroB"/>
    <property type="match status" value="1"/>
</dbReference>
<dbReference type="PANTHER" id="PTHR43622">
    <property type="entry name" value="3-DEHYDROQUINATE SYNTHASE"/>
    <property type="match status" value="1"/>
</dbReference>
<dbReference type="PANTHER" id="PTHR43622:SF7">
    <property type="entry name" value="3-DEHYDROQUINATE SYNTHASE, CHLOROPLASTIC"/>
    <property type="match status" value="1"/>
</dbReference>
<dbReference type="Pfam" id="PF01761">
    <property type="entry name" value="DHQ_synthase"/>
    <property type="match status" value="1"/>
</dbReference>
<dbReference type="Pfam" id="PF24621">
    <property type="entry name" value="DHQS_C"/>
    <property type="match status" value="1"/>
</dbReference>
<dbReference type="PIRSF" id="PIRSF001455">
    <property type="entry name" value="DHQ_synth"/>
    <property type="match status" value="1"/>
</dbReference>
<dbReference type="SUPFAM" id="SSF56796">
    <property type="entry name" value="Dehydroquinate synthase-like"/>
    <property type="match status" value="1"/>
</dbReference>
<reference key="1">
    <citation type="submission" date="2008-02" db="EMBL/GenBank/DDBJ databases">
        <title>Complete sequence of Synechococcus sp. PCC 7002.</title>
        <authorList>
            <person name="Li T."/>
            <person name="Zhao J."/>
            <person name="Zhao C."/>
            <person name="Liu Z."/>
            <person name="Zhao F."/>
            <person name="Marquardt J."/>
            <person name="Nomura C.T."/>
            <person name="Persson S."/>
            <person name="Detter J.C."/>
            <person name="Richardson P.M."/>
            <person name="Lanz C."/>
            <person name="Schuster S.C."/>
            <person name="Wang J."/>
            <person name="Li S."/>
            <person name="Huang X."/>
            <person name="Cai T."/>
            <person name="Yu Z."/>
            <person name="Luo J."/>
            <person name="Zhao J."/>
            <person name="Bryant D.A."/>
        </authorList>
    </citation>
    <scope>NUCLEOTIDE SEQUENCE [LARGE SCALE GENOMIC DNA]</scope>
    <source>
        <strain>ATCC 27264 / PCC 7002 / PR-6</strain>
    </source>
</reference>
<keyword id="KW-0028">Amino-acid biosynthesis</keyword>
<keyword id="KW-0057">Aromatic amino acid biosynthesis</keyword>
<keyword id="KW-0170">Cobalt</keyword>
<keyword id="KW-0963">Cytoplasm</keyword>
<keyword id="KW-0456">Lyase</keyword>
<keyword id="KW-0479">Metal-binding</keyword>
<keyword id="KW-0520">NAD</keyword>
<keyword id="KW-0547">Nucleotide-binding</keyword>
<keyword id="KW-1185">Reference proteome</keyword>
<keyword id="KW-0862">Zinc</keyword>
<organism>
    <name type="scientific">Picosynechococcus sp. (strain ATCC 27264 / PCC 7002 / PR-6)</name>
    <name type="common">Agmenellum quadruplicatum</name>
    <dbReference type="NCBI Taxonomy" id="32049"/>
    <lineage>
        <taxon>Bacteria</taxon>
        <taxon>Bacillati</taxon>
        <taxon>Cyanobacteriota</taxon>
        <taxon>Cyanophyceae</taxon>
        <taxon>Oscillatoriophycideae</taxon>
        <taxon>Chroococcales</taxon>
        <taxon>Geminocystaceae</taxon>
        <taxon>Picosynechococcus</taxon>
    </lineage>
</organism>
<gene>
    <name evidence="1" type="primary">aroB</name>
    <name type="ordered locus">SYNPCC7002_A1146</name>
</gene>